<name>HTDX_MYCTU</name>
<keyword id="KW-0002">3D-structure</keyword>
<keyword id="KW-0276">Fatty acid metabolism</keyword>
<keyword id="KW-0443">Lipid metabolism</keyword>
<keyword id="KW-0456">Lyase</keyword>
<keyword id="KW-1185">Reference proteome</keyword>
<reference key="1">
    <citation type="journal article" date="1998" name="Nature">
        <title>Deciphering the biology of Mycobacterium tuberculosis from the complete genome sequence.</title>
        <authorList>
            <person name="Cole S.T."/>
            <person name="Brosch R."/>
            <person name="Parkhill J."/>
            <person name="Garnier T."/>
            <person name="Churcher C.M."/>
            <person name="Harris D.E."/>
            <person name="Gordon S.V."/>
            <person name="Eiglmeier K."/>
            <person name="Gas S."/>
            <person name="Barry C.E. III"/>
            <person name="Tekaia F."/>
            <person name="Badcock K."/>
            <person name="Basham D."/>
            <person name="Brown D."/>
            <person name="Chillingworth T."/>
            <person name="Connor R."/>
            <person name="Davies R.M."/>
            <person name="Devlin K."/>
            <person name="Feltwell T."/>
            <person name="Gentles S."/>
            <person name="Hamlin N."/>
            <person name="Holroyd S."/>
            <person name="Hornsby T."/>
            <person name="Jagels K."/>
            <person name="Krogh A."/>
            <person name="McLean J."/>
            <person name="Moule S."/>
            <person name="Murphy L.D."/>
            <person name="Oliver S."/>
            <person name="Osborne J."/>
            <person name="Quail M.A."/>
            <person name="Rajandream M.A."/>
            <person name="Rogers J."/>
            <person name="Rutter S."/>
            <person name="Seeger K."/>
            <person name="Skelton S."/>
            <person name="Squares S."/>
            <person name="Squares R."/>
            <person name="Sulston J.E."/>
            <person name="Taylor K."/>
            <person name="Whitehead S."/>
            <person name="Barrell B.G."/>
        </authorList>
    </citation>
    <scope>NUCLEOTIDE SEQUENCE [LARGE SCALE GENOMIC DNA]</scope>
    <source>
        <strain>ATCC 25618 / H37Rv</strain>
    </source>
</reference>
<reference key="2">
    <citation type="journal article" date="2009" name="J. Bacteriol.">
        <title>Heterologous expression of mycobacterial proteins in Saccharomyces cerevisiae reveals two physiologically functional 3-hydroxyacyl-thioester dehydratases, HtdX and HtdY, in addition to HadABC and HtdZ.</title>
        <authorList>
            <person name="Gurvitz A."/>
            <person name="Hiltunen J.K."/>
            <person name="Kastaniotis A.J."/>
        </authorList>
    </citation>
    <scope>FUNCTION</scope>
</reference>
<reference key="3">
    <citation type="journal article" date="2010" name="J. Bacteriol.">
        <title>Revisiting the assignment of Rv0241c to fatty acid synthase type II of Mycobacterium tuberculosis.</title>
        <authorList>
            <person name="Sacco E."/>
            <person name="Slama N."/>
            <person name="Baeckbro K."/>
            <person name="Parish T."/>
            <person name="Laval F."/>
            <person name="Daffe M."/>
            <person name="Eynard N."/>
            <person name="Quemard A."/>
        </authorList>
    </citation>
    <scope>FUNCTION</scope>
    <scope>CATALYTIC ACTIVITY</scope>
    <scope>DISRUPTION PHENOTYPE</scope>
</reference>
<reference key="4">
    <citation type="journal article" date="2011" name="Mol. Cell. Proteomics">
        <title>Proteogenomic analysis of Mycobacterium tuberculosis by high resolution mass spectrometry.</title>
        <authorList>
            <person name="Kelkar D.S."/>
            <person name="Kumar D."/>
            <person name="Kumar P."/>
            <person name="Balakrishnan L."/>
            <person name="Muthusamy B."/>
            <person name="Yadav A.K."/>
            <person name="Shrivastava P."/>
            <person name="Marimuthu A."/>
            <person name="Anand S."/>
            <person name="Sundaram H."/>
            <person name="Kingsbury R."/>
            <person name="Harsha H.C."/>
            <person name="Nair B."/>
            <person name="Prasad T.S."/>
            <person name="Chauhan D.S."/>
            <person name="Katoch K."/>
            <person name="Katoch V.M."/>
            <person name="Kumar P."/>
            <person name="Chaerkady R."/>
            <person name="Ramachandran S."/>
            <person name="Dash D."/>
            <person name="Pandey A."/>
        </authorList>
    </citation>
    <scope>IDENTIFICATION BY MASS SPECTROMETRY [LARGE SCALE ANALYSIS]</scope>
    <source>
        <strain>ATCC 25618 / H37Rv</strain>
    </source>
</reference>
<reference evidence="8 9" key="5">
    <citation type="journal article" date="2013" name="Acta Crystallogr. F">
        <title>Cloning, overexpression, purification, crystallization and preliminary X-ray diffraction analysis of Rv0241c (HtdX) from Mycobacterium tuberculosis H37Rv.</title>
        <authorList>
            <person name="Biswas R."/>
            <person name="Dutta D."/>
            <person name="Das A.K."/>
        </authorList>
    </citation>
    <scope>X-RAY CRYSTALLOGRAPHY (2.30 ANGSTROMS) OF 29-280</scope>
    <source>
        <strain>H37Rv</strain>
    </source>
</reference>
<dbReference type="EC" id="4.2.1.-" evidence="4"/>
<dbReference type="EC" id="4.2.1.55" evidence="4"/>
<dbReference type="EC" id="4.2.1.119" evidence="4"/>
<dbReference type="EMBL" id="AL123456">
    <property type="protein sequence ID" value="CCP42970.1"/>
    <property type="molecule type" value="Genomic_DNA"/>
</dbReference>
<dbReference type="RefSeq" id="NP_214755.1">
    <property type="nucleotide sequence ID" value="NC_000962.3"/>
</dbReference>
<dbReference type="RefSeq" id="WP_003401305.1">
    <property type="nucleotide sequence ID" value="NZ_NVQJ01000001.1"/>
</dbReference>
<dbReference type="PDB" id="3WEW">
    <property type="method" value="X-ray"/>
    <property type="resolution" value="2.40 A"/>
    <property type="chains" value="A=29-280"/>
</dbReference>
<dbReference type="PDB" id="4OOB">
    <property type="method" value="X-ray"/>
    <property type="resolution" value="2.30 A"/>
    <property type="chains" value="A=29-280"/>
</dbReference>
<dbReference type="PDBsum" id="3WEW"/>
<dbReference type="PDBsum" id="4OOB"/>
<dbReference type="SMR" id="O53664"/>
<dbReference type="STRING" id="83332.Rv0241c"/>
<dbReference type="SwissLipids" id="SLP:000001024"/>
<dbReference type="PaxDb" id="83332-Rv0241c"/>
<dbReference type="DNASU" id="886686"/>
<dbReference type="GeneID" id="45424214"/>
<dbReference type="GeneID" id="886686"/>
<dbReference type="KEGG" id="mtu:Rv0241c"/>
<dbReference type="KEGG" id="mtv:RVBD_0241c"/>
<dbReference type="PATRIC" id="fig|83332.111.peg.274"/>
<dbReference type="TubercuList" id="Rv0241c"/>
<dbReference type="eggNOG" id="COG2030">
    <property type="taxonomic scope" value="Bacteria"/>
</dbReference>
<dbReference type="InParanoid" id="O53664"/>
<dbReference type="OrthoDB" id="9774179at2"/>
<dbReference type="PhylomeDB" id="O53664"/>
<dbReference type="EvolutionaryTrace" id="O53664"/>
<dbReference type="Proteomes" id="UP000001584">
    <property type="component" value="Chromosome"/>
</dbReference>
<dbReference type="GO" id="GO:0005835">
    <property type="term" value="C:fatty acid synthase complex"/>
    <property type="evidence" value="ECO:0007669"/>
    <property type="project" value="InterPro"/>
</dbReference>
<dbReference type="GO" id="GO:0005886">
    <property type="term" value="C:plasma membrane"/>
    <property type="evidence" value="ECO:0007005"/>
    <property type="project" value="MTBBASE"/>
</dbReference>
<dbReference type="GO" id="GO:0019171">
    <property type="term" value="F:(3R)-hydroxyacyl-[acyl-carrier-protein] dehydratase activity"/>
    <property type="evidence" value="ECO:0000315"/>
    <property type="project" value="MTBBASE"/>
</dbReference>
<dbReference type="GO" id="GO:0018812">
    <property type="term" value="F:3-hydroxyacyl-CoA dehydratase activity"/>
    <property type="evidence" value="ECO:0000314"/>
    <property type="project" value="MTBBASE"/>
</dbReference>
<dbReference type="GO" id="GO:0004312">
    <property type="term" value="F:fatty acid synthase activity"/>
    <property type="evidence" value="ECO:0007669"/>
    <property type="project" value="InterPro"/>
</dbReference>
<dbReference type="GO" id="GO:0006633">
    <property type="term" value="P:fatty acid biosynthetic process"/>
    <property type="evidence" value="ECO:0000315"/>
    <property type="project" value="MTBBASE"/>
</dbReference>
<dbReference type="GO" id="GO:0006631">
    <property type="term" value="P:fatty acid metabolic process"/>
    <property type="evidence" value="ECO:0000314"/>
    <property type="project" value="MTBBASE"/>
</dbReference>
<dbReference type="Gene3D" id="3.10.129.10">
    <property type="entry name" value="Hotdog Thioesterase"/>
    <property type="match status" value="1"/>
</dbReference>
<dbReference type="InterPro" id="IPR003965">
    <property type="entry name" value="Fatty_acid_synthase"/>
</dbReference>
<dbReference type="InterPro" id="IPR029069">
    <property type="entry name" value="HotDog_dom_sf"/>
</dbReference>
<dbReference type="InterPro" id="IPR002539">
    <property type="entry name" value="MaoC-like_dom"/>
</dbReference>
<dbReference type="PANTHER" id="PTHR43841">
    <property type="entry name" value="3-HYDROXYACYL-THIOESTER DEHYDRATASE HTDX-RELATED"/>
    <property type="match status" value="1"/>
</dbReference>
<dbReference type="PANTHER" id="PTHR43841:SF1">
    <property type="entry name" value="3-HYDROXYACYL-THIOESTER DEHYDRATASE X"/>
    <property type="match status" value="1"/>
</dbReference>
<dbReference type="Pfam" id="PF01575">
    <property type="entry name" value="MaoC_dehydratas"/>
    <property type="match status" value="1"/>
</dbReference>
<dbReference type="PRINTS" id="PR01483">
    <property type="entry name" value="FASYNTHASE"/>
</dbReference>
<dbReference type="SUPFAM" id="SSF54637">
    <property type="entry name" value="Thioesterase/thiol ester dehydrase-isomerase"/>
    <property type="match status" value="2"/>
</dbReference>
<evidence type="ECO:0000255" key="1"/>
<evidence type="ECO:0000256" key="2">
    <source>
        <dbReference type="SAM" id="MobiDB-lite"/>
    </source>
</evidence>
<evidence type="ECO:0000269" key="3">
    <source>
    </source>
</evidence>
<evidence type="ECO:0000269" key="4">
    <source>
    </source>
</evidence>
<evidence type="ECO:0000303" key="5">
    <source>
    </source>
</evidence>
<evidence type="ECO:0000305" key="6"/>
<evidence type="ECO:0000312" key="7">
    <source>
        <dbReference type="EMBL" id="CCP42970.1"/>
    </source>
</evidence>
<evidence type="ECO:0007744" key="8">
    <source>
        <dbReference type="PDB" id="3WEW"/>
    </source>
</evidence>
<evidence type="ECO:0007744" key="9">
    <source>
        <dbReference type="PDB" id="4OOB"/>
    </source>
</evidence>
<evidence type="ECO:0007829" key="10">
    <source>
        <dbReference type="PDB" id="3WEW"/>
    </source>
</evidence>
<evidence type="ECO:0007829" key="11">
    <source>
        <dbReference type="PDB" id="4OOB"/>
    </source>
</evidence>
<comment type="function">
    <text evidence="3 4">Shows trans-enoyl-CoA hydratase/3-hydroxyacyl-CoA dehydratase activity (PubMed:19136596, PubMed:20511508). Displays a broad chain length specificity, with a predilection for the C8 to C12 substrates (PubMed:20511508).</text>
</comment>
<comment type="catalytic activity">
    <reaction evidence="4">
        <text>a (3R)-3-hydroxyacyl-CoA = a (2E)-enoyl-CoA + H2O</text>
        <dbReference type="Rhea" id="RHEA:26526"/>
        <dbReference type="ChEBI" id="CHEBI:15377"/>
        <dbReference type="ChEBI" id="CHEBI:57319"/>
        <dbReference type="ChEBI" id="CHEBI:58856"/>
        <dbReference type="EC" id="4.2.1.119"/>
    </reaction>
</comment>
<comment type="catalytic activity">
    <reaction evidence="4">
        <text>(2E)-octenoyl-CoA + H2O = (3R)-hydroxyoctanoyl-CoA</text>
        <dbReference type="Rhea" id="RHEA:40187"/>
        <dbReference type="ChEBI" id="CHEBI:15377"/>
        <dbReference type="ChEBI" id="CHEBI:62242"/>
        <dbReference type="ChEBI" id="CHEBI:74279"/>
    </reaction>
</comment>
<comment type="catalytic activity">
    <reaction evidence="4">
        <text>(3R)-3-hydroxydodecanoyl-CoA = (2E)-dodecenoyl-CoA + H2O</text>
        <dbReference type="Rhea" id="RHEA:44024"/>
        <dbReference type="ChEBI" id="CHEBI:15377"/>
        <dbReference type="ChEBI" id="CHEBI:57330"/>
        <dbReference type="ChEBI" id="CHEBI:74276"/>
    </reaction>
</comment>
<comment type="catalytic activity">
    <reaction evidence="4">
        <text>(3R)-hydroxyhexadecanoyl-CoA = (2E)-hexadecenoyl-CoA + H2O</text>
        <dbReference type="Rhea" id="RHEA:39159"/>
        <dbReference type="ChEBI" id="CHEBI:15377"/>
        <dbReference type="ChEBI" id="CHEBI:61526"/>
        <dbReference type="ChEBI" id="CHEBI:74278"/>
    </reaction>
</comment>
<comment type="catalytic activity">
    <reaction evidence="4">
        <text>(3R)-hydroxyeicosanoyl-CoA = (2E)-eicosenoyl-CoA + H2O</text>
        <dbReference type="Rhea" id="RHEA:39175"/>
        <dbReference type="ChEBI" id="CHEBI:15377"/>
        <dbReference type="ChEBI" id="CHEBI:74691"/>
        <dbReference type="ChEBI" id="CHEBI:76373"/>
    </reaction>
</comment>
<comment type="catalytic activity">
    <reaction evidence="4">
        <text>(3R)-3-hydroxybutanoyl-CoA = (2E)-butenoyl-CoA + H2O</text>
        <dbReference type="Rhea" id="RHEA:17849"/>
        <dbReference type="ChEBI" id="CHEBI:15377"/>
        <dbReference type="ChEBI" id="CHEBI:57315"/>
        <dbReference type="ChEBI" id="CHEBI:57332"/>
        <dbReference type="EC" id="4.2.1.55"/>
    </reaction>
</comment>
<comment type="disruption phenotype">
    <text evidence="4">Deletion of the gene does not affect the biosynthesis of all three types of mycolic acid.</text>
</comment>
<comment type="similarity">
    <text evidence="6">Belongs to the enoyl-CoA hydratase/isomerase family.</text>
</comment>
<sequence>MTQPSGLKNLLRAAAGALPVVPRTDQLPNRTVTVEELPIDPANVAAYAAVTGLRYGNQVPLTYPFALTFPSVMSLVTGFDFPFAAMGAIHTENHITQYRPIAVTDAVGVRVRAENLREHRRGLLVDLVTNVSVGNDVAWHQVTTFLHQQRTSLSGEPKPPPQKKPKLPPPAAVLRITPAKIRRYAAVGGDHNPIHTNPIAAKLFGFPTVIAHGMFTAAAVLANIEARFPDAVRYSVRFAKPVLLPATAGLYVAEGDGGWDLTLRNMAKGYPHLTATVRGL</sequence>
<protein>
    <recommendedName>
        <fullName evidence="6">3-hydroxyacyl-thioester dehydratase X</fullName>
        <ecNumber evidence="4">4.2.1.-</ecNumber>
    </recommendedName>
    <alternativeName>
        <fullName evidence="6">3-hydroxybutyryl-CoA dehydratase</fullName>
        <ecNumber evidence="4">4.2.1.55</ecNumber>
    </alternativeName>
    <alternativeName>
        <fullName evidence="6">Enoyl-CoA hydratase 2</fullName>
        <ecNumber evidence="4">4.2.1.119</ecNumber>
    </alternativeName>
</protein>
<feature type="chain" id="PRO_0000448719" description="3-hydroxyacyl-thioester dehydratase X">
    <location>
        <begin position="1"/>
        <end position="280"/>
    </location>
</feature>
<feature type="domain" description="MaoC-like" evidence="1">
    <location>
        <begin position="162"/>
        <end position="256"/>
    </location>
</feature>
<feature type="region of interest" description="Disordered" evidence="2">
    <location>
        <begin position="149"/>
        <end position="170"/>
    </location>
</feature>
<feature type="strand" evidence="11">
    <location>
        <begin position="32"/>
        <end position="38"/>
    </location>
</feature>
<feature type="helix" evidence="11">
    <location>
        <begin position="41"/>
        <end position="51"/>
    </location>
</feature>
<feature type="strand" evidence="11">
    <location>
        <begin position="56"/>
        <end position="58"/>
    </location>
</feature>
<feature type="helix" evidence="11">
    <location>
        <begin position="63"/>
        <end position="77"/>
    </location>
</feature>
<feature type="strand" evidence="10">
    <location>
        <begin position="80"/>
        <end position="82"/>
    </location>
</feature>
<feature type="strand" evidence="11">
    <location>
        <begin position="89"/>
        <end position="99"/>
    </location>
</feature>
<feature type="strand" evidence="11">
    <location>
        <begin position="106"/>
        <end position="119"/>
    </location>
</feature>
<feature type="strand" evidence="11">
    <location>
        <begin position="122"/>
        <end position="133"/>
    </location>
</feature>
<feature type="strand" evidence="11">
    <location>
        <begin position="136"/>
        <end position="148"/>
    </location>
</feature>
<feature type="strand" evidence="11">
    <location>
        <begin position="154"/>
        <end position="156"/>
    </location>
</feature>
<feature type="strand" evidence="11">
    <location>
        <begin position="171"/>
        <end position="176"/>
    </location>
</feature>
<feature type="helix" evidence="11">
    <location>
        <begin position="178"/>
        <end position="187"/>
    </location>
</feature>
<feature type="turn" evidence="11">
    <location>
        <begin position="193"/>
        <end position="196"/>
    </location>
</feature>
<feature type="helix" evidence="11">
    <location>
        <begin position="198"/>
        <end position="203"/>
    </location>
</feature>
<feature type="helix" evidence="11">
    <location>
        <begin position="213"/>
        <end position="219"/>
    </location>
</feature>
<feature type="turn" evidence="11">
    <location>
        <begin position="220"/>
        <end position="223"/>
    </location>
</feature>
<feature type="helix" evidence="11">
    <location>
        <begin position="224"/>
        <end position="227"/>
    </location>
</feature>
<feature type="strand" evidence="11">
    <location>
        <begin position="230"/>
        <end position="238"/>
    </location>
</feature>
<feature type="strand" evidence="11">
    <location>
        <begin position="243"/>
        <end position="254"/>
    </location>
</feature>
<feature type="strand" evidence="11">
    <location>
        <begin position="256"/>
        <end position="264"/>
    </location>
</feature>
<feature type="turn" evidence="10">
    <location>
        <begin position="266"/>
        <end position="268"/>
    </location>
</feature>
<feature type="strand" evidence="11">
    <location>
        <begin position="271"/>
        <end position="279"/>
    </location>
</feature>
<proteinExistence type="evidence at protein level"/>
<accession>O53664</accession>
<accession>F2GM41</accession>
<accession>I6X8T8</accession>
<accession>Q7DA70</accession>
<organism>
    <name type="scientific">Mycobacterium tuberculosis (strain ATCC 25618 / H37Rv)</name>
    <dbReference type="NCBI Taxonomy" id="83332"/>
    <lineage>
        <taxon>Bacteria</taxon>
        <taxon>Bacillati</taxon>
        <taxon>Actinomycetota</taxon>
        <taxon>Actinomycetes</taxon>
        <taxon>Mycobacteriales</taxon>
        <taxon>Mycobacteriaceae</taxon>
        <taxon>Mycobacterium</taxon>
        <taxon>Mycobacterium tuberculosis complex</taxon>
    </lineage>
</organism>
<gene>
    <name evidence="5" type="primary">htdX</name>
    <name evidence="7" type="ordered locus">Rv0241c</name>
</gene>